<feature type="chain" id="PRO_1000079778" description="Large ribosomal subunit protein bL12">
    <location>
        <begin position="1"/>
        <end position="129"/>
    </location>
</feature>
<feature type="region of interest" description="Disordered" evidence="2">
    <location>
        <begin position="95"/>
        <end position="129"/>
    </location>
</feature>
<feature type="compositionally biased region" description="Basic and acidic residues" evidence="2">
    <location>
        <begin position="95"/>
        <end position="123"/>
    </location>
</feature>
<gene>
    <name evidence="1" type="primary">rplL</name>
    <name evidence="1" type="synonym">rpl12</name>
    <name type="ordered locus">AM1_2868</name>
</gene>
<organism>
    <name type="scientific">Acaryochloris marina (strain MBIC 11017)</name>
    <dbReference type="NCBI Taxonomy" id="329726"/>
    <lineage>
        <taxon>Bacteria</taxon>
        <taxon>Bacillati</taxon>
        <taxon>Cyanobacteriota</taxon>
        <taxon>Cyanophyceae</taxon>
        <taxon>Acaryochloridales</taxon>
        <taxon>Acaryochloridaceae</taxon>
        <taxon>Acaryochloris</taxon>
    </lineage>
</organism>
<sequence>MSATEEILEKLKSLTLLEAADLVKQIEETFGVSAAPAAGVMMAAPGAGGAAGGEEAEEKTEFDVVLEEVPSDKKIAVLKVVRTLTGLGLKEAKEMVESTPKSIKEGVSKEDAEEAKKSLEDAGGKASLK</sequence>
<proteinExistence type="inferred from homology"/>
<evidence type="ECO:0000255" key="1">
    <source>
        <dbReference type="HAMAP-Rule" id="MF_00368"/>
    </source>
</evidence>
<evidence type="ECO:0000256" key="2">
    <source>
        <dbReference type="SAM" id="MobiDB-lite"/>
    </source>
</evidence>
<evidence type="ECO:0000305" key="3"/>
<comment type="function">
    <text evidence="1">Forms part of the ribosomal stalk which helps the ribosome interact with GTP-bound translation factors. Is thus essential for accurate translation.</text>
</comment>
<comment type="subunit">
    <text evidence="1">Homodimer. Part of the ribosomal stalk of the 50S ribosomal subunit. Forms a multimeric L10(L12)X complex, where L10 forms an elongated spine to which 2 to 4 L12 dimers bind in a sequential fashion. Binds GTP-bound translation factors.</text>
</comment>
<comment type="similarity">
    <text evidence="1">Belongs to the bacterial ribosomal protein bL12 family.</text>
</comment>
<accession>B0CAD2</accession>
<reference key="1">
    <citation type="journal article" date="2008" name="Proc. Natl. Acad. Sci. U.S.A.">
        <title>Niche adaptation and genome expansion in the chlorophyll d-producing cyanobacterium Acaryochloris marina.</title>
        <authorList>
            <person name="Swingley W.D."/>
            <person name="Chen M."/>
            <person name="Cheung P.C."/>
            <person name="Conrad A.L."/>
            <person name="Dejesa L.C."/>
            <person name="Hao J."/>
            <person name="Honchak B.M."/>
            <person name="Karbach L.E."/>
            <person name="Kurdoglu A."/>
            <person name="Lahiri S."/>
            <person name="Mastrian S.D."/>
            <person name="Miyashita H."/>
            <person name="Page L."/>
            <person name="Ramakrishna P."/>
            <person name="Satoh S."/>
            <person name="Sattley W.M."/>
            <person name="Shimada Y."/>
            <person name="Taylor H.L."/>
            <person name="Tomo T."/>
            <person name="Tsuchiya T."/>
            <person name="Wang Z.T."/>
            <person name="Raymond J."/>
            <person name="Mimuro M."/>
            <person name="Blankenship R.E."/>
            <person name="Touchman J.W."/>
        </authorList>
    </citation>
    <scope>NUCLEOTIDE SEQUENCE [LARGE SCALE GENOMIC DNA]</scope>
    <source>
        <strain>MBIC 11017</strain>
    </source>
</reference>
<dbReference type="EMBL" id="CP000828">
    <property type="protein sequence ID" value="ABW27867.1"/>
    <property type="molecule type" value="Genomic_DNA"/>
</dbReference>
<dbReference type="RefSeq" id="WP_012163306.1">
    <property type="nucleotide sequence ID" value="NC_009925.1"/>
</dbReference>
<dbReference type="SMR" id="B0CAD2"/>
<dbReference type="STRING" id="329726.AM1_2868"/>
<dbReference type="KEGG" id="amr:AM1_2868"/>
<dbReference type="eggNOG" id="COG0222">
    <property type="taxonomic scope" value="Bacteria"/>
</dbReference>
<dbReference type="HOGENOM" id="CLU_086499_3_0_3"/>
<dbReference type="OrthoDB" id="9811748at2"/>
<dbReference type="Proteomes" id="UP000000268">
    <property type="component" value="Chromosome"/>
</dbReference>
<dbReference type="GO" id="GO:0022625">
    <property type="term" value="C:cytosolic large ribosomal subunit"/>
    <property type="evidence" value="ECO:0007669"/>
    <property type="project" value="TreeGrafter"/>
</dbReference>
<dbReference type="GO" id="GO:0003729">
    <property type="term" value="F:mRNA binding"/>
    <property type="evidence" value="ECO:0007669"/>
    <property type="project" value="TreeGrafter"/>
</dbReference>
<dbReference type="GO" id="GO:0003735">
    <property type="term" value="F:structural constituent of ribosome"/>
    <property type="evidence" value="ECO:0007669"/>
    <property type="project" value="InterPro"/>
</dbReference>
<dbReference type="GO" id="GO:0006412">
    <property type="term" value="P:translation"/>
    <property type="evidence" value="ECO:0007669"/>
    <property type="project" value="UniProtKB-UniRule"/>
</dbReference>
<dbReference type="CDD" id="cd00387">
    <property type="entry name" value="Ribosomal_L7_L12"/>
    <property type="match status" value="1"/>
</dbReference>
<dbReference type="FunFam" id="3.30.1390.10:FF:000001">
    <property type="entry name" value="50S ribosomal protein L7/L12"/>
    <property type="match status" value="1"/>
</dbReference>
<dbReference type="Gene3D" id="3.30.1390.10">
    <property type="match status" value="1"/>
</dbReference>
<dbReference type="Gene3D" id="1.20.5.710">
    <property type="entry name" value="Single helix bin"/>
    <property type="match status" value="1"/>
</dbReference>
<dbReference type="HAMAP" id="MF_00368">
    <property type="entry name" value="Ribosomal_bL12"/>
    <property type="match status" value="1"/>
</dbReference>
<dbReference type="InterPro" id="IPR000206">
    <property type="entry name" value="Ribosomal_bL12"/>
</dbReference>
<dbReference type="InterPro" id="IPR013823">
    <property type="entry name" value="Ribosomal_bL12_C"/>
</dbReference>
<dbReference type="InterPro" id="IPR014719">
    <property type="entry name" value="Ribosomal_bL12_C/ClpS-like"/>
</dbReference>
<dbReference type="InterPro" id="IPR008932">
    <property type="entry name" value="Ribosomal_bL12_oligo"/>
</dbReference>
<dbReference type="InterPro" id="IPR036235">
    <property type="entry name" value="Ribosomal_bL12_oligo_N_sf"/>
</dbReference>
<dbReference type="NCBIfam" id="TIGR00855">
    <property type="entry name" value="L12"/>
    <property type="match status" value="1"/>
</dbReference>
<dbReference type="PANTHER" id="PTHR45987">
    <property type="entry name" value="39S RIBOSOMAL PROTEIN L12"/>
    <property type="match status" value="1"/>
</dbReference>
<dbReference type="PANTHER" id="PTHR45987:SF4">
    <property type="entry name" value="LARGE RIBOSOMAL SUBUNIT PROTEIN BL12M"/>
    <property type="match status" value="1"/>
</dbReference>
<dbReference type="Pfam" id="PF00542">
    <property type="entry name" value="Ribosomal_L12"/>
    <property type="match status" value="1"/>
</dbReference>
<dbReference type="Pfam" id="PF16320">
    <property type="entry name" value="Ribosomal_L12_N"/>
    <property type="match status" value="1"/>
</dbReference>
<dbReference type="SUPFAM" id="SSF54736">
    <property type="entry name" value="ClpS-like"/>
    <property type="match status" value="1"/>
</dbReference>
<dbReference type="SUPFAM" id="SSF48300">
    <property type="entry name" value="Ribosomal protein L7/12, oligomerisation (N-terminal) domain"/>
    <property type="match status" value="1"/>
</dbReference>
<name>RL7_ACAM1</name>
<keyword id="KW-1185">Reference proteome</keyword>
<keyword id="KW-0687">Ribonucleoprotein</keyword>
<keyword id="KW-0689">Ribosomal protein</keyword>
<protein>
    <recommendedName>
        <fullName evidence="1">Large ribosomal subunit protein bL12</fullName>
    </recommendedName>
    <alternativeName>
        <fullName evidence="3">50S ribosomal protein L7/L12</fullName>
    </alternativeName>
</protein>